<protein>
    <recommendedName>
        <fullName evidence="5">Down syndrome critical region protein 8</fullName>
    </recommendedName>
    <alternativeName>
        <fullName>Cancer/testis antigen 25</fullName>
        <shortName>CT25</shortName>
    </alternativeName>
    <alternativeName>
        <fullName evidence="6">DCR1-24.0</fullName>
    </alternativeName>
    <alternativeName>
        <fullName evidence="4 7">Malignant melanoma-associated protein 1</fullName>
        <shortName evidence="4 7">MMA-1</shortName>
    </alternativeName>
    <alternativeName>
        <fullName>Protein MTAG2</fullName>
    </alternativeName>
</protein>
<comment type="interaction">
    <interactant intactId="EBI-10294182">
        <id>Q96T75</id>
    </interactant>
    <interactant intactId="EBI-10173507">
        <id>Q6UY14-3</id>
        <label>ADAMTSL4</label>
    </interactant>
    <organismsDiffer>false</organismsDiffer>
    <experiments>3</experiments>
</comment>
<comment type="interaction">
    <interactant intactId="EBI-12382810">
        <id>Q96T75-3</id>
    </interactant>
    <interactant intactId="EBI-16439278">
        <id>Q6FHY5</id>
        <label>MEOX2</label>
    </interactant>
    <organismsDiffer>false</organismsDiffer>
    <experiments>3</experiments>
</comment>
<comment type="alternative products">
    <event type="alternative splicing"/>
    <isoform>
        <id>Q96T75-1</id>
        <name>1</name>
        <name>MTAG5</name>
        <name evidence="7">MMA1C</name>
        <sequence type="displayed"/>
    </isoform>
    <isoform>
        <id>Q96T75-2</id>
        <name>2</name>
        <name>MTAG6</name>
        <name evidence="7">MMA1F</name>
        <sequence type="described" ref="VSP_003856 VSP_003857"/>
    </isoform>
    <isoform>
        <id>Q96T75-3</id>
        <name>3</name>
        <name>MMA-1a</name>
        <name evidence="4">MMA1A</name>
        <sequence type="described" ref="VSP_003858"/>
    </isoform>
    <isoform>
        <id>Q96T75-4</id>
        <name>4</name>
        <name>MMA-1b</name>
        <name evidence="4">MMA1B</name>
        <sequence type="described" ref="VSP_003859 VSP_003860"/>
    </isoform>
    <isoform>
        <id>Q96T75-5</id>
        <name>5</name>
        <name evidence="7">MMA1D</name>
        <sequence type="described" ref="VSP_059067"/>
    </isoform>
    <isoform>
        <id>Q96T75-6</id>
        <name>6</name>
        <name evidence="7">MMA1E</name>
        <sequence type="described" ref="VSP_059066"/>
    </isoform>
</comment>
<comment type="tissue specificity">
    <text evidence="1 2 3">Expressed in numerous tissues; not found in breast, heart, small intestine and liver (PubMed:12036297). Isoform 1: Predominantly expressed in the testis (PubMed:11920614, PubMed:15472897). Isoform 3: Predominantly expressed in the testis, at lower level in the placenta, during malignant progression of melanocytic tumors and in several tumors of varying origins (PubMed:11920614, PubMed:15472897). Isoform 4: Predominantly expressed in the testis, at lower level in the placenta, during malignant progression of melanocytic tumors and in several tumors of varying origins (PubMed:11920614, PubMed:15472897). Isoform 5: Predominantly expressed in the testis (PubMed:11920614, PubMed:15472897). Isoform 6: Predominantly expressed in the testis (PubMed:11920614, PubMed:15472897).</text>
</comment>
<comment type="miscellaneous">
    <text evidence="9">Potential cancer-testis antigen, with expression restricted to the testis and certain malignant cells.</text>
</comment>
<comment type="miscellaneous">
    <molecule>Isoform 1</molecule>
    <text evidence="1 3">Predominantly expressed in the testis.</text>
</comment>
<comment type="miscellaneous">
    <molecule>Isoform 3</molecule>
    <text evidence="1 3">Predominantly expressed in the testis, at lower level in the placenta, during malignant progression of melanocytic tumors and in several tumors of varying origins.</text>
</comment>
<comment type="miscellaneous">
    <molecule>Isoform 4</molecule>
    <text evidence="1 3">Predominantly expressed in the testis, at lower level in the placenta, during malignant progression of melanocytic tumors and in several tumors of varying origins.</text>
</comment>
<comment type="miscellaneous">
    <molecule>Isoform 5</molecule>
    <text evidence="1 3">Predominantly expressed in the testis.</text>
</comment>
<comment type="miscellaneous">
    <molecule>Isoform 6</molecule>
    <text evidence="1 3">Predominantly expressed in the testis.</text>
</comment>
<proteinExistence type="evidence at protein level"/>
<keyword id="KW-0025">Alternative splicing</keyword>
<keyword id="KW-1185">Reference proteome</keyword>
<organism>
    <name type="scientific">Homo sapiens</name>
    <name type="common">Human</name>
    <dbReference type="NCBI Taxonomy" id="9606"/>
    <lineage>
        <taxon>Eukaryota</taxon>
        <taxon>Metazoa</taxon>
        <taxon>Chordata</taxon>
        <taxon>Craniata</taxon>
        <taxon>Vertebrata</taxon>
        <taxon>Euteleostomi</taxon>
        <taxon>Mammalia</taxon>
        <taxon>Eutheria</taxon>
        <taxon>Euarchontoglires</taxon>
        <taxon>Primates</taxon>
        <taxon>Haplorrhini</taxon>
        <taxon>Catarrhini</taxon>
        <taxon>Hominidae</taxon>
        <taxon>Homo</taxon>
    </lineage>
</organism>
<sequence>MKEPGPNFVTVRKGLHSFKMAFVKHLLLFLSPRLECSGSITDHCSLHLPVQEILMSQPPEQLGLQTNLGNQESSGMMKLFMPRPKVLAQYESIQFMP</sequence>
<dbReference type="EMBL" id="AJ297914">
    <property type="protein sequence ID" value="CAC82786.1"/>
    <property type="molecule type" value="mRNA"/>
</dbReference>
<dbReference type="EMBL" id="AJ306840">
    <property type="protein sequence ID" value="CAC84765.1"/>
    <property type="molecule type" value="mRNA"/>
</dbReference>
<dbReference type="EMBL" id="AJ306839">
    <property type="protein sequence ID" value="CAC84766.1"/>
    <property type="molecule type" value="mRNA"/>
</dbReference>
<dbReference type="EMBL" id="AJ301615">
    <property type="protein sequence ID" value="CAD29791.1"/>
    <property type="molecule type" value="mRNA"/>
</dbReference>
<dbReference type="EMBL" id="AF321193">
    <property type="protein sequence ID" value="AAK52673.1"/>
    <property type="molecule type" value="mRNA"/>
</dbReference>
<dbReference type="EMBL" id="AF426256">
    <property type="protein sequence ID" value="AAM53512.1"/>
    <property type="molecule type" value="mRNA"/>
</dbReference>
<dbReference type="EMBL" id="AJ783421">
    <property type="protein sequence ID" value="CAH03845.1"/>
    <property type="molecule type" value="mRNA"/>
</dbReference>
<dbReference type="EMBL" id="AJ305085">
    <property type="protein sequence ID" value="CAH03994.1"/>
    <property type="molecule type" value="mRNA"/>
</dbReference>
<dbReference type="EMBL" id="CH471079">
    <property type="protein sequence ID" value="EAX09690.1"/>
    <property type="molecule type" value="Genomic_DNA"/>
</dbReference>
<dbReference type="EMBL" id="AP001417">
    <property type="status" value="NOT_ANNOTATED_CDS"/>
    <property type="molecule type" value="Genomic_DNA"/>
</dbReference>
<dbReference type="EMBL" id="BC015981">
    <property type="status" value="NOT_ANNOTATED_CDS"/>
    <property type="molecule type" value="mRNA"/>
</dbReference>
<dbReference type="IntAct" id="Q96T75">
    <property type="interactions" value="2"/>
</dbReference>
<dbReference type="BioMuta" id="DSCR8"/>
<dbReference type="PaxDb" id="9606-ENSP00000350336"/>
<dbReference type="PeptideAtlas" id="Q96T75"/>
<dbReference type="ProteomicsDB" id="78209">
    <molecule id="Q96T75-4"/>
</dbReference>
<dbReference type="UCSC" id="uc062abe.1">
    <molecule id="Q96T75-1"/>
    <property type="organism name" value="human"/>
</dbReference>
<dbReference type="AGR" id="HGNC:16707"/>
<dbReference type="GeneCards" id="DSCR8"/>
<dbReference type="HGNC" id="HGNC:16707">
    <property type="gene designation" value="DSCR8"/>
</dbReference>
<dbReference type="MIM" id="613396">
    <property type="type" value="gene"/>
</dbReference>
<dbReference type="neXtProt" id="NX_Q96T75"/>
<dbReference type="eggNOG" id="ENOG502TAQZ">
    <property type="taxonomic scope" value="Eukaryota"/>
</dbReference>
<dbReference type="HOGENOM" id="CLU_187806_0_0_1"/>
<dbReference type="InParanoid" id="Q96T75"/>
<dbReference type="PAN-GO" id="Q96T75">
    <property type="GO annotations" value="0 GO annotations based on evolutionary models"/>
</dbReference>
<dbReference type="PhylomeDB" id="Q96T75"/>
<dbReference type="TreeFam" id="TF341571"/>
<dbReference type="PathwayCommons" id="Q96T75"/>
<dbReference type="SignaLink" id="Q96T75"/>
<dbReference type="ChiTaRS" id="DSCR8">
    <property type="organism name" value="human"/>
</dbReference>
<dbReference type="Pharos" id="Q96T75">
    <property type="development level" value="Tdark"/>
</dbReference>
<dbReference type="PRO" id="PR:Q96T75"/>
<dbReference type="Proteomes" id="UP000005640">
    <property type="component" value="Unplaced"/>
</dbReference>
<dbReference type="RNAct" id="Q96T75">
    <property type="molecule type" value="protein"/>
</dbReference>
<gene>
    <name evidence="10" type="primary">DSCR8</name>
    <name evidence="10" type="synonym">C21orf65</name>
    <name type="synonym">MTAG2</name>
</gene>
<name>DSCR8_HUMAN</name>
<accession>Q96T75</accession>
<accession>Q684H4</accession>
<accession>Q6EXA9</accession>
<accession>Q8N3X0</accession>
<accession>Q8NDY5</accession>
<accession>Q96B46</accession>
<feature type="chain" id="PRO_0000080021" description="Down syndrome critical region protein 8">
    <location>
        <begin position="1"/>
        <end position="97"/>
    </location>
</feature>
<feature type="splice variant" id="VSP_059066" description="In isoform 6.">
    <original>MKEPGPNFVTVRKGLHSFKMAFVKHLLLFLSPRLECSGSITDHCSLHLPVQEILMSQPPEQLGLQ</original>
    <variation>MHNIMMVKLKKKKST</variation>
    <location>
        <begin position="1"/>
        <end position="65"/>
    </location>
</feature>
<feature type="splice variant" id="VSP_059067" description="In isoform 5.">
    <location>
        <begin position="1"/>
        <end position="54"/>
    </location>
</feature>
<feature type="splice variant" id="VSP_003856" description="In isoform 2." evidence="7">
    <location>
        <begin position="1"/>
        <end position="27"/>
    </location>
</feature>
<feature type="splice variant" id="VSP_003859" description="In isoform 4." evidence="4 8">
    <original>LFLSPRLECS</original>
    <variation>QTLEIKKVLE</variation>
    <location>
        <begin position="28"/>
        <end position="37"/>
    </location>
</feature>
<feature type="splice variant" id="VSP_003858" description="In isoform 3." evidence="4 5 6">
    <location>
        <begin position="28"/>
        <end position="33"/>
    </location>
</feature>
<feature type="splice variant" id="VSP_003857" description="In isoform 2." evidence="7">
    <original>LFLSP</original>
    <variation>MYSYW</variation>
    <location>
        <begin position="28"/>
        <end position="32"/>
    </location>
</feature>
<feature type="splice variant" id="VSP_003860" description="In isoform 4." evidence="4 8">
    <location>
        <begin position="38"/>
        <end position="97"/>
    </location>
</feature>
<reference key="1">
    <citation type="journal article" date="2002" name="Int. J. Cancer">
        <title>Expression profiling of MMA-1a and splice variant MMA-1b: new cancer/testis antigens identified in human melanoma.</title>
        <authorList>
            <person name="de Wit N.J."/>
            <person name="Weidle U.H."/>
            <person name="Ruiter D.J."/>
            <person name="van Muijen G.N."/>
        </authorList>
    </citation>
    <scope>NUCLEOTIDE SEQUENCE [MRNA] (ISOFORMS 3 AND 4)</scope>
    <scope>TISSUE SPECIFICITY</scope>
</reference>
<reference key="2">
    <citation type="journal article" date="2002" name="Genome Res.">
        <title>Comparative genomic sequence analysis of the human chromosome 21 Down syndrome critical region.</title>
        <authorList>
            <person name="Toyoda A."/>
            <person name="Noguchi H."/>
            <person name="Taylor T.D."/>
            <person name="Ito T."/>
            <person name="Pletcher M.T."/>
            <person name="Sakaki Y."/>
            <person name="Reeves R.H."/>
            <person name="Hattori M."/>
        </authorList>
    </citation>
    <scope>NUCLEOTIDE SEQUENCE [MRNA] (ISOFORM 3)</scope>
</reference>
<reference key="3">
    <citation type="journal article" date="2002" name="Genomics">
        <title>Nineteen additional unpredicted transcripts from human chromosome 21.</title>
        <authorList>
            <person name="Reymond A."/>
            <person name="Camargo A.A."/>
            <person name="Deutsch S."/>
            <person name="Stevenson B.J."/>
            <person name="Parmigiani R.B."/>
            <person name="Ucla C."/>
            <person name="Bettoni F."/>
            <person name="Rossier C."/>
            <person name="Lyle R."/>
            <person name="Guipponi M."/>
            <person name="de Souza S."/>
            <person name="Iseli C."/>
            <person name="Jongeneel C.V."/>
            <person name="Bucher P."/>
            <person name="Simpson A.J.G."/>
            <person name="Antonarakis S.E."/>
        </authorList>
    </citation>
    <scope>NUCLEOTIDE SEQUENCE [MRNA] (ISOFORM 3)</scope>
    <scope>TISSUE SPECIFICITY</scope>
</reference>
<reference key="4">
    <citation type="journal article" date="2005" name="Genes Chromosomes Cancer">
        <title>The MMA1 gene family of cancer-testis antigens has multiple alternative splice variants: characterization of their expression profile, the genomic organization, and transcript properties.</title>
        <authorList>
            <person name="de Wit N.J."/>
            <person name="Cornelissen I.M."/>
            <person name="Diepstra J.H."/>
            <person name="Weidle U.H."/>
            <person name="Ruiter D.J."/>
            <person name="van Muijen G.N."/>
        </authorList>
    </citation>
    <scope>NUCLEOTIDE SEQUENCE [MRNA] (ISOFORMS 1; 2; 5 AND 6)</scope>
    <scope>TISSUE SPECIFICITY</scope>
</reference>
<reference key="5">
    <citation type="journal article" date="2000" name="Nature">
        <title>The DNA sequence of human chromosome 21.</title>
        <authorList>
            <person name="Hattori M."/>
            <person name="Fujiyama A."/>
            <person name="Taylor T.D."/>
            <person name="Watanabe H."/>
            <person name="Yada T."/>
            <person name="Park H.-S."/>
            <person name="Toyoda A."/>
            <person name="Ishii K."/>
            <person name="Totoki Y."/>
            <person name="Choi D.-K."/>
            <person name="Groner Y."/>
            <person name="Soeda E."/>
            <person name="Ohki M."/>
            <person name="Takagi T."/>
            <person name="Sakaki Y."/>
            <person name="Taudien S."/>
            <person name="Blechschmidt K."/>
            <person name="Polley A."/>
            <person name="Menzel U."/>
            <person name="Delabar J."/>
            <person name="Kumpf K."/>
            <person name="Lehmann R."/>
            <person name="Patterson D."/>
            <person name="Reichwald K."/>
            <person name="Rump A."/>
            <person name="Schillhabel M."/>
            <person name="Schudy A."/>
            <person name="Zimmermann W."/>
            <person name="Rosenthal A."/>
            <person name="Kudoh J."/>
            <person name="Shibuya K."/>
            <person name="Kawasaki K."/>
            <person name="Asakawa S."/>
            <person name="Shintani A."/>
            <person name="Sasaki T."/>
            <person name="Nagamine K."/>
            <person name="Mitsuyama S."/>
            <person name="Antonarakis S.E."/>
            <person name="Minoshima S."/>
            <person name="Shimizu N."/>
            <person name="Nordsiek G."/>
            <person name="Hornischer K."/>
            <person name="Brandt P."/>
            <person name="Scharfe M."/>
            <person name="Schoen O."/>
            <person name="Desario A."/>
            <person name="Reichelt J."/>
            <person name="Kauer G."/>
            <person name="Bloecker H."/>
            <person name="Ramser J."/>
            <person name="Beck A."/>
            <person name="Klages S."/>
            <person name="Hennig S."/>
            <person name="Riesselmann L."/>
            <person name="Dagand E."/>
            <person name="Wehrmeyer S."/>
            <person name="Borzym K."/>
            <person name="Gardiner K."/>
            <person name="Nizetic D."/>
            <person name="Francis F."/>
            <person name="Lehrach H."/>
            <person name="Reinhardt R."/>
            <person name="Yaspo M.-L."/>
        </authorList>
    </citation>
    <scope>NUCLEOTIDE SEQUENCE [LARGE SCALE GENOMIC DNA]</scope>
</reference>
<reference key="6">
    <citation type="submission" date="2005-09" db="EMBL/GenBank/DDBJ databases">
        <authorList>
            <person name="Mural R.J."/>
            <person name="Istrail S."/>
            <person name="Sutton G."/>
            <person name="Florea L."/>
            <person name="Halpern A.L."/>
            <person name="Mobarry C.M."/>
            <person name="Lippert R."/>
            <person name="Walenz B."/>
            <person name="Shatkay H."/>
            <person name="Dew I."/>
            <person name="Miller J.R."/>
            <person name="Flanigan M.J."/>
            <person name="Edwards N.J."/>
            <person name="Bolanos R."/>
            <person name="Fasulo D."/>
            <person name="Halldorsson B.V."/>
            <person name="Hannenhalli S."/>
            <person name="Turner R."/>
            <person name="Yooseph S."/>
            <person name="Lu F."/>
            <person name="Nusskern D.R."/>
            <person name="Shue B.C."/>
            <person name="Zheng X.H."/>
            <person name="Zhong F."/>
            <person name="Delcher A.L."/>
            <person name="Huson D.H."/>
            <person name="Kravitz S.A."/>
            <person name="Mouchard L."/>
            <person name="Reinert K."/>
            <person name="Remington K.A."/>
            <person name="Clark A.G."/>
            <person name="Waterman M.S."/>
            <person name="Eichler E.E."/>
            <person name="Adams M.D."/>
            <person name="Hunkapiller M.W."/>
            <person name="Myers E.W."/>
            <person name="Venter J.C."/>
        </authorList>
    </citation>
    <scope>NUCLEOTIDE SEQUENCE [LARGE SCALE GENOMIC DNA]</scope>
</reference>
<reference key="7">
    <citation type="journal article" date="2004" name="Genome Res.">
        <title>The status, quality, and expansion of the NIH full-length cDNA project: the Mammalian Gene Collection (MGC).</title>
        <authorList>
            <consortium name="The MGC Project Team"/>
        </authorList>
    </citation>
    <scope>NUCLEOTIDE SEQUENCE [LARGE SCALE MRNA] (ISOFORM 4)</scope>
    <source>
        <tissue>Bone marrow</tissue>
    </source>
</reference>
<evidence type="ECO:0000269" key="1">
    <source>
    </source>
</evidence>
<evidence type="ECO:0000269" key="2">
    <source>
    </source>
</evidence>
<evidence type="ECO:0000269" key="3">
    <source>
    </source>
</evidence>
<evidence type="ECO:0000303" key="4">
    <source>
    </source>
</evidence>
<evidence type="ECO:0000303" key="5">
    <source>
    </source>
</evidence>
<evidence type="ECO:0000303" key="6">
    <source>
    </source>
</evidence>
<evidence type="ECO:0000303" key="7">
    <source>
    </source>
</evidence>
<evidence type="ECO:0000303" key="8">
    <source>
    </source>
</evidence>
<evidence type="ECO:0000305" key="9">
    <source>
    </source>
</evidence>
<evidence type="ECO:0000312" key="10">
    <source>
        <dbReference type="HGNC" id="HGNC:16707"/>
    </source>
</evidence>